<dbReference type="EC" id="3.6.4.-"/>
<dbReference type="EMBL" id="AB022912">
    <property type="protein sequence ID" value="BAA84456.1"/>
    <property type="molecule type" value="Genomic_DNA"/>
</dbReference>
<dbReference type="EMBL" id="CU329672">
    <property type="protein sequence ID" value="CAB62827.1"/>
    <property type="molecule type" value="Genomic_DNA"/>
</dbReference>
<dbReference type="PIR" id="T50449">
    <property type="entry name" value="T50449"/>
</dbReference>
<dbReference type="RefSeq" id="NP_588091.1">
    <property type="nucleotide sequence ID" value="NM_001023082.2"/>
</dbReference>
<dbReference type="SMR" id="Q9UR24"/>
<dbReference type="BioGRID" id="276036">
    <property type="interactions" value="27"/>
</dbReference>
<dbReference type="FunCoup" id="Q9UR24">
    <property type="interactions" value="366"/>
</dbReference>
<dbReference type="STRING" id="284812.Q9UR24"/>
<dbReference type="iPTMnet" id="Q9UR24"/>
<dbReference type="PaxDb" id="4896-SPCP25A2.02c.1"/>
<dbReference type="EnsemblFungi" id="SPCP25A2.02c.1">
    <property type="protein sequence ID" value="SPCP25A2.02c.1:pep"/>
    <property type="gene ID" value="SPCP25A2.02c"/>
</dbReference>
<dbReference type="GeneID" id="2539473"/>
<dbReference type="KEGG" id="spo:2539473"/>
<dbReference type="PomBase" id="SPCP25A2.02c">
    <property type="gene designation" value="rhp26"/>
</dbReference>
<dbReference type="VEuPathDB" id="FungiDB:SPCP25A2.02c"/>
<dbReference type="eggNOG" id="KOG0387">
    <property type="taxonomic scope" value="Eukaryota"/>
</dbReference>
<dbReference type="HOGENOM" id="CLU_000315_7_0_1"/>
<dbReference type="InParanoid" id="Q9UR24"/>
<dbReference type="OMA" id="NEFHQWW"/>
<dbReference type="PhylomeDB" id="Q9UR24"/>
<dbReference type="Reactome" id="R-SPO-6781823">
    <property type="pathway name" value="Formation of TC-NER Pre-Incision Complex"/>
</dbReference>
<dbReference type="Reactome" id="R-SPO-6782135">
    <property type="pathway name" value="Dual incision in TC-NER"/>
</dbReference>
<dbReference type="Reactome" id="R-SPO-6782210">
    <property type="pathway name" value="Gap-filling DNA repair synthesis and ligation in TC-NER"/>
</dbReference>
<dbReference type="PRO" id="PR:Q9UR24"/>
<dbReference type="Proteomes" id="UP000002485">
    <property type="component" value="Chromosome III"/>
</dbReference>
<dbReference type="GO" id="GO:0005829">
    <property type="term" value="C:cytosol"/>
    <property type="evidence" value="ECO:0007005"/>
    <property type="project" value="PomBase"/>
</dbReference>
<dbReference type="GO" id="GO:0005634">
    <property type="term" value="C:nucleus"/>
    <property type="evidence" value="ECO:0007005"/>
    <property type="project" value="PomBase"/>
</dbReference>
<dbReference type="GO" id="GO:0005524">
    <property type="term" value="F:ATP binding"/>
    <property type="evidence" value="ECO:0000255"/>
    <property type="project" value="PomBase"/>
</dbReference>
<dbReference type="GO" id="GO:0016887">
    <property type="term" value="F:ATP hydrolysis activity"/>
    <property type="evidence" value="ECO:0000305"/>
    <property type="project" value="PomBase"/>
</dbReference>
<dbReference type="GO" id="GO:0140658">
    <property type="term" value="F:ATP-dependent chromatin remodeler activity"/>
    <property type="evidence" value="ECO:0000318"/>
    <property type="project" value="GO_Central"/>
</dbReference>
<dbReference type="GO" id="GO:0004386">
    <property type="term" value="F:helicase activity"/>
    <property type="evidence" value="ECO:0007669"/>
    <property type="project" value="UniProtKB-KW"/>
</dbReference>
<dbReference type="GO" id="GO:0006283">
    <property type="term" value="P:transcription-coupled nucleotide-excision repair"/>
    <property type="evidence" value="ECO:0000315"/>
    <property type="project" value="PomBase"/>
</dbReference>
<dbReference type="CDD" id="cd18000">
    <property type="entry name" value="DEXHc_ERCC6"/>
    <property type="match status" value="1"/>
</dbReference>
<dbReference type="CDD" id="cd18793">
    <property type="entry name" value="SF2_C_SNF"/>
    <property type="match status" value="1"/>
</dbReference>
<dbReference type="FunFam" id="3.40.50.300:FF:000863">
    <property type="entry name" value="DNA excision repair protein ERCC-6"/>
    <property type="match status" value="1"/>
</dbReference>
<dbReference type="FunFam" id="3.40.50.10810:FF:000039">
    <property type="entry name" value="DNA repair protein Rhp26/Rad26"/>
    <property type="match status" value="1"/>
</dbReference>
<dbReference type="Gene3D" id="3.40.50.300">
    <property type="entry name" value="P-loop containing nucleotide triphosphate hydrolases"/>
    <property type="match status" value="1"/>
</dbReference>
<dbReference type="Gene3D" id="3.40.50.10810">
    <property type="entry name" value="Tandem AAA-ATPase domain"/>
    <property type="match status" value="1"/>
</dbReference>
<dbReference type="InterPro" id="IPR014001">
    <property type="entry name" value="Helicase_ATP-bd"/>
</dbReference>
<dbReference type="InterPro" id="IPR001650">
    <property type="entry name" value="Helicase_C-like"/>
</dbReference>
<dbReference type="InterPro" id="IPR027417">
    <property type="entry name" value="P-loop_NTPase"/>
</dbReference>
<dbReference type="InterPro" id="IPR038718">
    <property type="entry name" value="SNF2-like_sf"/>
</dbReference>
<dbReference type="InterPro" id="IPR049730">
    <property type="entry name" value="SNF2/RAD54-like_C"/>
</dbReference>
<dbReference type="InterPro" id="IPR000330">
    <property type="entry name" value="SNF2_N"/>
</dbReference>
<dbReference type="InterPro" id="IPR050496">
    <property type="entry name" value="SNF2_RAD54_helicase_repair"/>
</dbReference>
<dbReference type="PANTHER" id="PTHR45629:SF7">
    <property type="entry name" value="DNA EXCISION REPAIR PROTEIN ERCC-6-RELATED"/>
    <property type="match status" value="1"/>
</dbReference>
<dbReference type="PANTHER" id="PTHR45629">
    <property type="entry name" value="SNF2/RAD54 FAMILY MEMBER"/>
    <property type="match status" value="1"/>
</dbReference>
<dbReference type="Pfam" id="PF00271">
    <property type="entry name" value="Helicase_C"/>
    <property type="match status" value="1"/>
</dbReference>
<dbReference type="Pfam" id="PF00176">
    <property type="entry name" value="SNF2-rel_dom"/>
    <property type="match status" value="1"/>
</dbReference>
<dbReference type="SMART" id="SM00487">
    <property type="entry name" value="DEXDc"/>
    <property type="match status" value="1"/>
</dbReference>
<dbReference type="SMART" id="SM00490">
    <property type="entry name" value="HELICc"/>
    <property type="match status" value="1"/>
</dbReference>
<dbReference type="SUPFAM" id="SSF52540">
    <property type="entry name" value="P-loop containing nucleoside triphosphate hydrolases"/>
    <property type="match status" value="2"/>
</dbReference>
<dbReference type="PROSITE" id="PS51192">
    <property type="entry name" value="HELICASE_ATP_BIND_1"/>
    <property type="match status" value="1"/>
</dbReference>
<dbReference type="PROSITE" id="PS51194">
    <property type="entry name" value="HELICASE_CTER"/>
    <property type="match status" value="1"/>
</dbReference>
<proteinExistence type="predicted"/>
<evidence type="ECO:0000255" key="1"/>
<evidence type="ECO:0000255" key="2">
    <source>
        <dbReference type="PROSITE-ProRule" id="PRU00541"/>
    </source>
</evidence>
<evidence type="ECO:0000255" key="3">
    <source>
        <dbReference type="PROSITE-ProRule" id="PRU00542"/>
    </source>
</evidence>
<evidence type="ECO:0000256" key="4">
    <source>
        <dbReference type="SAM" id="MobiDB-lite"/>
    </source>
</evidence>
<evidence type="ECO:0000269" key="5">
    <source>
    </source>
</evidence>
<evidence type="ECO:0000269" key="6">
    <source>
    </source>
</evidence>
<name>RHP26_SCHPO</name>
<sequence length="973" mass="110914">MSVNEDLSHLGVFSVDQENLERDVTNTASEYIAHESREIEKKRLQKVRKEISSVKEKIRRLDERIDSRLTKISVKENFRKQLSKFRDTLQSLQSDENDIKRRLNNEDSANAPGIGAFSTEELERQELIRTGKVTPFRNLSGLQKEVDFDDESSIREAVIKSEGTYYETAPHLSSEPSNIDHGIIPRDEKDEYVTVDAVTEKVVTAAIDDGDDLVYRQRLNAWCANRKELRDQASASENNKDRGEFEGKDEWLLPHPSKKGQTFEGGFTIPGDIRPHLFRYQVTCVQWLWELYCQEAGGIIGDEMGLGKTIQIVSFLSSLHHSGKFQKPALIVCPATLMKQWVNEFHTWWAPLRVVVLHATGSGQRASREKRQYESDASESEAEESKTSIKLRGASSSFHRYAKNLVESVFTRGHILITTYAGLRIYGDLILPREWGYCVLDEGHKIRNPDSEISISCKQIRTVNRIILSGTPIQNNLTELWNLFDFVFPGRLGTLPVFQNQFALPINIGGYANASNVQVQTAYKCACMLRDLISPYLLRRMKLDVAADLPKKSEQVLFCKLTPLQRKAYQDFLQGSDMQKILNGKRQMLYGIDILRKICNHPDLVTREYLLHKEDYNYGDPEKSGKLKVIRALLTLWKKQGHRTLLFSQTRQMLDILEIGLKDLPDVHYCRMDGSTSIALRQDLVDNFNKNEYFDVFLLTTRVGGLGVNLTGADRVILFDPDWNPSTDAQARERAWRLGQKKDVVVYRLMTAGTIEEKIYHRQIFKQFLTNKILKDPKQRRFFKMTDLHDLFTLGDNKTEGTETGSMFLGSERVLRKDNSSRNGNEAEDIPARDRKKHKIHDKGKKVNSSKVFEKMGIASMEKYKPPQESNVTKTNSDSTLGDDSVLDDIFASAGIQSTLKHDDIMEASQTESILVEKEATRVANEALRAVSSFRRPPRQLIPPQQSTNVPGTSKPSGPITSSTLLARLKQRR</sequence>
<keyword id="KW-0067">ATP-binding</keyword>
<keyword id="KW-0175">Coiled coil</keyword>
<keyword id="KW-0963">Cytoplasm</keyword>
<keyword id="KW-0347">Helicase</keyword>
<keyword id="KW-0378">Hydrolase</keyword>
<keyword id="KW-0547">Nucleotide-binding</keyword>
<keyword id="KW-0539">Nucleus</keyword>
<keyword id="KW-1185">Reference proteome</keyword>
<gene>
    <name type="primary">rhp26</name>
    <name type="ORF">SPCP25A2.02c</name>
</gene>
<accession>Q9UR24</accession>
<organism>
    <name type="scientific">Schizosaccharomyces pombe (strain 972 / ATCC 24843)</name>
    <name type="common">Fission yeast</name>
    <dbReference type="NCBI Taxonomy" id="284812"/>
    <lineage>
        <taxon>Eukaryota</taxon>
        <taxon>Fungi</taxon>
        <taxon>Dikarya</taxon>
        <taxon>Ascomycota</taxon>
        <taxon>Taphrinomycotina</taxon>
        <taxon>Schizosaccharomycetes</taxon>
        <taxon>Schizosaccharomycetales</taxon>
        <taxon>Schizosaccharomycetaceae</taxon>
        <taxon>Schizosaccharomyces</taxon>
    </lineage>
</organism>
<comment type="function">
    <text evidence="5">Involved in transcription-coupled repair (TCR).</text>
</comment>
<comment type="subcellular location">
    <subcellularLocation>
        <location evidence="6">Cytoplasm</location>
    </subcellularLocation>
    <subcellularLocation>
        <location evidence="6">Nucleus</location>
    </subcellularLocation>
</comment>
<reference key="1">
    <citation type="journal article" date="1999" name="J. Biol. Chem.">
        <title>Transcription dependence and the roles of two excision repair pathways for UV damage in fission yeast Schizosaccharomyces pombe.</title>
        <authorList>
            <person name="Yasuhira S."/>
            <person name="Morimyo M."/>
            <person name="Yasui A."/>
        </authorList>
    </citation>
    <scope>NUCLEOTIDE SEQUENCE [GENOMIC DNA]</scope>
    <scope>FUNCTION</scope>
</reference>
<reference key="2">
    <citation type="journal article" date="2002" name="Nature">
        <title>The genome sequence of Schizosaccharomyces pombe.</title>
        <authorList>
            <person name="Wood V."/>
            <person name="Gwilliam R."/>
            <person name="Rajandream M.A."/>
            <person name="Lyne M.H."/>
            <person name="Lyne R."/>
            <person name="Stewart A."/>
            <person name="Sgouros J.G."/>
            <person name="Peat N."/>
            <person name="Hayles J."/>
            <person name="Baker S.G."/>
            <person name="Basham D."/>
            <person name="Bowman S."/>
            <person name="Brooks K."/>
            <person name="Brown D."/>
            <person name="Brown S."/>
            <person name="Chillingworth T."/>
            <person name="Churcher C.M."/>
            <person name="Collins M."/>
            <person name="Connor R."/>
            <person name="Cronin A."/>
            <person name="Davis P."/>
            <person name="Feltwell T."/>
            <person name="Fraser A."/>
            <person name="Gentles S."/>
            <person name="Goble A."/>
            <person name="Hamlin N."/>
            <person name="Harris D.E."/>
            <person name="Hidalgo J."/>
            <person name="Hodgson G."/>
            <person name="Holroyd S."/>
            <person name="Hornsby T."/>
            <person name="Howarth S."/>
            <person name="Huckle E.J."/>
            <person name="Hunt S."/>
            <person name="Jagels K."/>
            <person name="James K.D."/>
            <person name="Jones L."/>
            <person name="Jones M."/>
            <person name="Leather S."/>
            <person name="McDonald S."/>
            <person name="McLean J."/>
            <person name="Mooney P."/>
            <person name="Moule S."/>
            <person name="Mungall K.L."/>
            <person name="Murphy L.D."/>
            <person name="Niblett D."/>
            <person name="Odell C."/>
            <person name="Oliver K."/>
            <person name="O'Neil S."/>
            <person name="Pearson D."/>
            <person name="Quail M.A."/>
            <person name="Rabbinowitsch E."/>
            <person name="Rutherford K.M."/>
            <person name="Rutter S."/>
            <person name="Saunders D."/>
            <person name="Seeger K."/>
            <person name="Sharp S."/>
            <person name="Skelton J."/>
            <person name="Simmonds M.N."/>
            <person name="Squares R."/>
            <person name="Squares S."/>
            <person name="Stevens K."/>
            <person name="Taylor K."/>
            <person name="Taylor R.G."/>
            <person name="Tivey A."/>
            <person name="Walsh S.V."/>
            <person name="Warren T."/>
            <person name="Whitehead S."/>
            <person name="Woodward J.R."/>
            <person name="Volckaert G."/>
            <person name="Aert R."/>
            <person name="Robben J."/>
            <person name="Grymonprez B."/>
            <person name="Weltjens I."/>
            <person name="Vanstreels E."/>
            <person name="Rieger M."/>
            <person name="Schaefer M."/>
            <person name="Mueller-Auer S."/>
            <person name="Gabel C."/>
            <person name="Fuchs M."/>
            <person name="Duesterhoeft A."/>
            <person name="Fritzc C."/>
            <person name="Holzer E."/>
            <person name="Moestl D."/>
            <person name="Hilbert H."/>
            <person name="Borzym K."/>
            <person name="Langer I."/>
            <person name="Beck A."/>
            <person name="Lehrach H."/>
            <person name="Reinhardt R."/>
            <person name="Pohl T.M."/>
            <person name="Eger P."/>
            <person name="Zimmermann W."/>
            <person name="Wedler H."/>
            <person name="Wambutt R."/>
            <person name="Purnelle B."/>
            <person name="Goffeau A."/>
            <person name="Cadieu E."/>
            <person name="Dreano S."/>
            <person name="Gloux S."/>
            <person name="Lelaure V."/>
            <person name="Mottier S."/>
            <person name="Galibert F."/>
            <person name="Aves S.J."/>
            <person name="Xiang Z."/>
            <person name="Hunt C."/>
            <person name="Moore K."/>
            <person name="Hurst S.M."/>
            <person name="Lucas M."/>
            <person name="Rochet M."/>
            <person name="Gaillardin C."/>
            <person name="Tallada V.A."/>
            <person name="Garzon A."/>
            <person name="Thode G."/>
            <person name="Daga R.R."/>
            <person name="Cruzado L."/>
            <person name="Jimenez J."/>
            <person name="Sanchez M."/>
            <person name="del Rey F."/>
            <person name="Benito J."/>
            <person name="Dominguez A."/>
            <person name="Revuelta J.L."/>
            <person name="Moreno S."/>
            <person name="Armstrong J."/>
            <person name="Forsburg S.L."/>
            <person name="Cerutti L."/>
            <person name="Lowe T."/>
            <person name="McCombie W.R."/>
            <person name="Paulsen I."/>
            <person name="Potashkin J."/>
            <person name="Shpakovski G.V."/>
            <person name="Ussery D."/>
            <person name="Barrell B.G."/>
            <person name="Nurse P."/>
        </authorList>
    </citation>
    <scope>NUCLEOTIDE SEQUENCE [LARGE SCALE GENOMIC DNA]</scope>
    <source>
        <strain>972 / ATCC 24843</strain>
    </source>
</reference>
<reference key="3">
    <citation type="journal article" date="2006" name="Nat. Biotechnol.">
        <title>ORFeome cloning and global analysis of protein localization in the fission yeast Schizosaccharomyces pombe.</title>
        <authorList>
            <person name="Matsuyama A."/>
            <person name="Arai R."/>
            <person name="Yashiroda Y."/>
            <person name="Shirai A."/>
            <person name="Kamata A."/>
            <person name="Sekido S."/>
            <person name="Kobayashi Y."/>
            <person name="Hashimoto A."/>
            <person name="Hamamoto M."/>
            <person name="Hiraoka Y."/>
            <person name="Horinouchi S."/>
            <person name="Yoshida M."/>
        </authorList>
    </citation>
    <scope>SUBCELLULAR LOCATION [LARGE SCALE ANALYSIS]</scope>
</reference>
<protein>
    <recommendedName>
        <fullName>DNA repair protein rhp26</fullName>
        <ecNumber>3.6.4.-</ecNumber>
    </recommendedName>
    <alternativeName>
        <fullName>RAD26 homolog</fullName>
    </alternativeName>
</protein>
<feature type="chain" id="PRO_0000372387" description="DNA repair protein rhp26">
    <location>
        <begin position="1"/>
        <end position="973"/>
    </location>
</feature>
<feature type="domain" description="Helicase ATP-binding" evidence="2">
    <location>
        <begin position="289"/>
        <end position="490"/>
    </location>
</feature>
<feature type="domain" description="Helicase C-terminal" evidence="3">
    <location>
        <begin position="629"/>
        <end position="789"/>
    </location>
</feature>
<feature type="region of interest" description="Disordered" evidence="4">
    <location>
        <begin position="230"/>
        <end position="251"/>
    </location>
</feature>
<feature type="region of interest" description="Disordered" evidence="4">
    <location>
        <begin position="367"/>
        <end position="386"/>
    </location>
</feature>
<feature type="region of interest" description="Disordered" evidence="4">
    <location>
        <begin position="803"/>
        <end position="846"/>
    </location>
</feature>
<feature type="region of interest" description="Disordered" evidence="4">
    <location>
        <begin position="863"/>
        <end position="882"/>
    </location>
</feature>
<feature type="region of interest" description="Disordered" evidence="4">
    <location>
        <begin position="930"/>
        <end position="973"/>
    </location>
</feature>
<feature type="coiled-coil region" evidence="1">
    <location>
        <begin position="35"/>
        <end position="107"/>
    </location>
</feature>
<feature type="short sequence motif" description="DEAH box">
    <location>
        <begin position="441"/>
        <end position="444"/>
    </location>
</feature>
<feature type="compositionally biased region" description="Basic and acidic residues" evidence="4">
    <location>
        <begin position="238"/>
        <end position="251"/>
    </location>
</feature>
<feature type="compositionally biased region" description="Basic residues" evidence="4">
    <location>
        <begin position="834"/>
        <end position="846"/>
    </location>
</feature>
<feature type="compositionally biased region" description="Polar residues" evidence="4">
    <location>
        <begin position="868"/>
        <end position="882"/>
    </location>
</feature>
<feature type="compositionally biased region" description="Polar residues" evidence="4">
    <location>
        <begin position="947"/>
        <end position="965"/>
    </location>
</feature>
<feature type="binding site" evidence="2">
    <location>
        <begin position="302"/>
        <end position="309"/>
    </location>
    <ligand>
        <name>ATP</name>
        <dbReference type="ChEBI" id="CHEBI:30616"/>
    </ligand>
</feature>